<organism>
    <name type="scientific">Listeria monocytogenes serotype 4b (strain CLIP80459)</name>
    <dbReference type="NCBI Taxonomy" id="568819"/>
    <lineage>
        <taxon>Bacteria</taxon>
        <taxon>Bacillati</taxon>
        <taxon>Bacillota</taxon>
        <taxon>Bacilli</taxon>
        <taxon>Bacillales</taxon>
        <taxon>Listeriaceae</taxon>
        <taxon>Listeria</taxon>
    </lineage>
</organism>
<reference key="1">
    <citation type="journal article" date="2012" name="BMC Genomics">
        <title>Comparative genomics and transcriptomics of lineages I, II, and III strains of Listeria monocytogenes.</title>
        <authorList>
            <person name="Hain T."/>
            <person name="Ghai R."/>
            <person name="Billion A."/>
            <person name="Kuenne C.T."/>
            <person name="Steinweg C."/>
            <person name="Izar B."/>
            <person name="Mohamed W."/>
            <person name="Mraheil M."/>
            <person name="Domann E."/>
            <person name="Schaffrath S."/>
            <person name="Karst U."/>
            <person name="Goesmann A."/>
            <person name="Oehm S."/>
            <person name="Puhler A."/>
            <person name="Merkl R."/>
            <person name="Vorwerk S."/>
            <person name="Glaser P."/>
            <person name="Garrido P."/>
            <person name="Rusniok C."/>
            <person name="Buchrieser C."/>
            <person name="Goebel W."/>
            <person name="Chakraborty T."/>
        </authorList>
    </citation>
    <scope>NUCLEOTIDE SEQUENCE [LARGE SCALE GENOMIC DNA]</scope>
    <source>
        <strain>CLIP80459</strain>
    </source>
</reference>
<sequence>MDNGIFIVATIFIVNILYVTIYTVRLLLTMKGYRYLAALSSVFEMIIYVVALSLVLDNLNNIANVLAYAIGFGVGIIVGMKIEERIALGYITVNVITKEYNLDLPNQIRDLGYGVTSWLASGRDGERMMLEILTQRKNERKLYKHIIEIDNGAFIVSSEPKQIHGGFWVKQVRK</sequence>
<feature type="chain" id="PRO_1000215351" description="UPF0316 protein Lm4b_01790">
    <location>
        <begin position="1"/>
        <end position="174"/>
    </location>
</feature>
<feature type="transmembrane region" description="Helical" evidence="1">
    <location>
        <begin position="4"/>
        <end position="24"/>
    </location>
</feature>
<feature type="transmembrane region" description="Helical" evidence="1">
    <location>
        <begin position="36"/>
        <end position="56"/>
    </location>
</feature>
<feature type="transmembrane region" description="Helical" evidence="1">
    <location>
        <begin position="62"/>
        <end position="82"/>
    </location>
</feature>
<evidence type="ECO:0000255" key="1">
    <source>
        <dbReference type="HAMAP-Rule" id="MF_01515"/>
    </source>
</evidence>
<protein>
    <recommendedName>
        <fullName evidence="1">UPF0316 protein Lm4b_01790</fullName>
    </recommendedName>
</protein>
<accession>C1KW75</accession>
<gene>
    <name type="ordered locus">Lm4b_01790</name>
</gene>
<comment type="subcellular location">
    <subcellularLocation>
        <location evidence="1">Cell membrane</location>
        <topology evidence="1">Multi-pass membrane protein</topology>
    </subcellularLocation>
</comment>
<comment type="similarity">
    <text evidence="1">Belongs to the UPF0316 family.</text>
</comment>
<keyword id="KW-1003">Cell membrane</keyword>
<keyword id="KW-0472">Membrane</keyword>
<keyword id="KW-0812">Transmembrane</keyword>
<keyword id="KW-1133">Transmembrane helix</keyword>
<proteinExistence type="inferred from homology"/>
<name>Y1790_LISMC</name>
<dbReference type="EMBL" id="FM242711">
    <property type="protein sequence ID" value="CAS05550.1"/>
    <property type="molecule type" value="Genomic_DNA"/>
</dbReference>
<dbReference type="RefSeq" id="WP_003726218.1">
    <property type="nucleotide sequence ID" value="NC_012488.1"/>
</dbReference>
<dbReference type="SMR" id="C1KW75"/>
<dbReference type="KEGG" id="lmc:Lm4b_01790"/>
<dbReference type="HOGENOM" id="CLU_106166_1_0_9"/>
<dbReference type="GO" id="GO:0005886">
    <property type="term" value="C:plasma membrane"/>
    <property type="evidence" value="ECO:0007669"/>
    <property type="project" value="UniProtKB-SubCell"/>
</dbReference>
<dbReference type="CDD" id="cd16381">
    <property type="entry name" value="YitT_C_like_1"/>
    <property type="match status" value="1"/>
</dbReference>
<dbReference type="HAMAP" id="MF_01515">
    <property type="entry name" value="UPF0316"/>
    <property type="match status" value="1"/>
</dbReference>
<dbReference type="InterPro" id="IPR019264">
    <property type="entry name" value="DUF2179"/>
</dbReference>
<dbReference type="InterPro" id="IPR044035">
    <property type="entry name" value="DUF5698"/>
</dbReference>
<dbReference type="InterPro" id="IPR022930">
    <property type="entry name" value="UPF0316"/>
</dbReference>
<dbReference type="NCBIfam" id="NF003192">
    <property type="entry name" value="PRK04164.1-3"/>
    <property type="match status" value="1"/>
</dbReference>
<dbReference type="NCBIfam" id="NF003194">
    <property type="entry name" value="PRK04164.1-5"/>
    <property type="match status" value="1"/>
</dbReference>
<dbReference type="PANTHER" id="PTHR40060">
    <property type="entry name" value="UPF0316 PROTEIN YEBE"/>
    <property type="match status" value="1"/>
</dbReference>
<dbReference type="PANTHER" id="PTHR40060:SF1">
    <property type="entry name" value="UPF0316 PROTEIN YEBE"/>
    <property type="match status" value="1"/>
</dbReference>
<dbReference type="Pfam" id="PF10035">
    <property type="entry name" value="DUF2179"/>
    <property type="match status" value="1"/>
</dbReference>
<dbReference type="Pfam" id="PF18955">
    <property type="entry name" value="DUF5698"/>
    <property type="match status" value="1"/>
</dbReference>